<comment type="function">
    <text evidence="1">The RuvA-RuvB-RuvC complex processes Holliday junction (HJ) DNA during genetic recombination and DNA repair, while the RuvA-RuvB complex plays an important role in the rescue of blocked DNA replication forks via replication fork reversal (RFR). RuvA specifically binds to HJ cruciform DNA, conferring on it an open structure. The RuvB hexamer acts as an ATP-dependent pump, pulling dsDNA into and through the RuvAB complex. RuvB forms 2 homohexamers on either side of HJ DNA bound by 1 or 2 RuvA tetramers; 4 subunits per hexamer contact DNA at a time. Coordinated motions by a converter formed by DNA-disengaged RuvB subunits stimulates ATP hydrolysis and nucleotide exchange. Immobilization of the converter enables RuvB to convert the ATP-contained energy into a lever motion, pulling 2 nucleotides of DNA out of the RuvA tetramer per ATP hydrolyzed, thus driving DNA branch migration. The RuvB motors rotate together with the DNA substrate, which together with the progressing nucleotide cycle form the mechanistic basis for DNA recombination by continuous HJ branch migration. Branch migration allows RuvC to scan DNA until it finds its consensus sequence, where it cleaves and resolves cruciform DNA.</text>
</comment>
<comment type="catalytic activity">
    <reaction evidence="1">
        <text>ATP + H2O = ADP + phosphate + H(+)</text>
        <dbReference type="Rhea" id="RHEA:13065"/>
        <dbReference type="ChEBI" id="CHEBI:15377"/>
        <dbReference type="ChEBI" id="CHEBI:15378"/>
        <dbReference type="ChEBI" id="CHEBI:30616"/>
        <dbReference type="ChEBI" id="CHEBI:43474"/>
        <dbReference type="ChEBI" id="CHEBI:456216"/>
    </reaction>
</comment>
<comment type="subunit">
    <text evidence="1">Homohexamer. Forms an RuvA(8)-RuvB(12)-Holliday junction (HJ) complex. HJ DNA is sandwiched between 2 RuvA tetramers; dsDNA enters through RuvA and exits via RuvB. An RuvB hexamer assembles on each DNA strand where it exits the tetramer. Each RuvB hexamer is contacted by two RuvA subunits (via domain III) on 2 adjacent RuvB subunits; this complex drives branch migration. In the full resolvosome a probable DNA-RuvA(4)-RuvB(12)-RuvC(2) complex forms which resolves the HJ.</text>
</comment>
<comment type="subcellular location">
    <subcellularLocation>
        <location evidence="1">Cytoplasm</location>
    </subcellularLocation>
</comment>
<comment type="domain">
    <text evidence="1">Has 3 domains, the large (RuvB-L) and small ATPase (RuvB-S) domains and the C-terminal head (RuvB-H) domain. The head domain binds DNA, while the ATPase domains jointly bind ATP, ADP or are empty depending on the state of the subunit in the translocation cycle. During a single DNA translocation step the structure of each domain remains the same, but their relative positions change.</text>
</comment>
<comment type="similarity">
    <text evidence="1">Belongs to the RuvB family.</text>
</comment>
<gene>
    <name evidence="1" type="primary">ruvB</name>
    <name type="ordered locus">HS_0270</name>
</gene>
<dbReference type="EC" id="3.6.4.-" evidence="1"/>
<dbReference type="EMBL" id="CP000436">
    <property type="protein sequence ID" value="ABI24548.1"/>
    <property type="molecule type" value="Genomic_DNA"/>
</dbReference>
<dbReference type="SMR" id="Q0I1M3"/>
<dbReference type="KEGG" id="hso:HS_0270"/>
<dbReference type="eggNOG" id="COG2255">
    <property type="taxonomic scope" value="Bacteria"/>
</dbReference>
<dbReference type="HOGENOM" id="CLU_055599_1_0_6"/>
<dbReference type="GO" id="GO:0005737">
    <property type="term" value="C:cytoplasm"/>
    <property type="evidence" value="ECO:0007669"/>
    <property type="project" value="UniProtKB-SubCell"/>
</dbReference>
<dbReference type="GO" id="GO:0048476">
    <property type="term" value="C:Holliday junction resolvase complex"/>
    <property type="evidence" value="ECO:0007669"/>
    <property type="project" value="UniProtKB-UniRule"/>
</dbReference>
<dbReference type="GO" id="GO:0005524">
    <property type="term" value="F:ATP binding"/>
    <property type="evidence" value="ECO:0007669"/>
    <property type="project" value="UniProtKB-UniRule"/>
</dbReference>
<dbReference type="GO" id="GO:0016887">
    <property type="term" value="F:ATP hydrolysis activity"/>
    <property type="evidence" value="ECO:0007669"/>
    <property type="project" value="InterPro"/>
</dbReference>
<dbReference type="GO" id="GO:0000400">
    <property type="term" value="F:four-way junction DNA binding"/>
    <property type="evidence" value="ECO:0007669"/>
    <property type="project" value="UniProtKB-UniRule"/>
</dbReference>
<dbReference type="GO" id="GO:0009378">
    <property type="term" value="F:four-way junction helicase activity"/>
    <property type="evidence" value="ECO:0007669"/>
    <property type="project" value="InterPro"/>
</dbReference>
<dbReference type="GO" id="GO:0006310">
    <property type="term" value="P:DNA recombination"/>
    <property type="evidence" value="ECO:0007669"/>
    <property type="project" value="UniProtKB-UniRule"/>
</dbReference>
<dbReference type="GO" id="GO:0006281">
    <property type="term" value="P:DNA repair"/>
    <property type="evidence" value="ECO:0007669"/>
    <property type="project" value="UniProtKB-UniRule"/>
</dbReference>
<dbReference type="CDD" id="cd00009">
    <property type="entry name" value="AAA"/>
    <property type="match status" value="1"/>
</dbReference>
<dbReference type="FunFam" id="1.10.10.10:FF:000086">
    <property type="entry name" value="Holliday junction ATP-dependent DNA helicase RuvB"/>
    <property type="match status" value="1"/>
</dbReference>
<dbReference type="FunFam" id="3.40.50.300:FF:000073">
    <property type="entry name" value="Holliday junction ATP-dependent DNA helicase RuvB"/>
    <property type="match status" value="1"/>
</dbReference>
<dbReference type="Gene3D" id="1.10.8.60">
    <property type="match status" value="1"/>
</dbReference>
<dbReference type="Gene3D" id="3.40.50.300">
    <property type="entry name" value="P-loop containing nucleotide triphosphate hydrolases"/>
    <property type="match status" value="1"/>
</dbReference>
<dbReference type="Gene3D" id="1.10.10.10">
    <property type="entry name" value="Winged helix-like DNA-binding domain superfamily/Winged helix DNA-binding domain"/>
    <property type="match status" value="1"/>
</dbReference>
<dbReference type="HAMAP" id="MF_00016">
    <property type="entry name" value="DNA_HJ_migration_RuvB"/>
    <property type="match status" value="1"/>
</dbReference>
<dbReference type="InterPro" id="IPR003593">
    <property type="entry name" value="AAA+_ATPase"/>
</dbReference>
<dbReference type="InterPro" id="IPR041445">
    <property type="entry name" value="AAA_lid_4"/>
</dbReference>
<dbReference type="InterPro" id="IPR004605">
    <property type="entry name" value="DNA_helicase_Holl-junc_RuvB"/>
</dbReference>
<dbReference type="InterPro" id="IPR027417">
    <property type="entry name" value="P-loop_NTPase"/>
</dbReference>
<dbReference type="InterPro" id="IPR008824">
    <property type="entry name" value="RuvB-like_N"/>
</dbReference>
<dbReference type="InterPro" id="IPR008823">
    <property type="entry name" value="RuvB_C"/>
</dbReference>
<dbReference type="InterPro" id="IPR036388">
    <property type="entry name" value="WH-like_DNA-bd_sf"/>
</dbReference>
<dbReference type="InterPro" id="IPR036390">
    <property type="entry name" value="WH_DNA-bd_sf"/>
</dbReference>
<dbReference type="NCBIfam" id="NF000868">
    <property type="entry name" value="PRK00080.1"/>
    <property type="match status" value="1"/>
</dbReference>
<dbReference type="NCBIfam" id="TIGR00635">
    <property type="entry name" value="ruvB"/>
    <property type="match status" value="1"/>
</dbReference>
<dbReference type="PANTHER" id="PTHR42848">
    <property type="match status" value="1"/>
</dbReference>
<dbReference type="PANTHER" id="PTHR42848:SF1">
    <property type="entry name" value="HOLLIDAY JUNCTION BRANCH MIGRATION COMPLEX SUBUNIT RUVB"/>
    <property type="match status" value="1"/>
</dbReference>
<dbReference type="Pfam" id="PF17864">
    <property type="entry name" value="AAA_lid_4"/>
    <property type="match status" value="1"/>
</dbReference>
<dbReference type="Pfam" id="PF05491">
    <property type="entry name" value="RuvB_C"/>
    <property type="match status" value="1"/>
</dbReference>
<dbReference type="Pfam" id="PF05496">
    <property type="entry name" value="RuvB_N"/>
    <property type="match status" value="1"/>
</dbReference>
<dbReference type="SMART" id="SM00382">
    <property type="entry name" value="AAA"/>
    <property type="match status" value="1"/>
</dbReference>
<dbReference type="SUPFAM" id="SSF52540">
    <property type="entry name" value="P-loop containing nucleoside triphosphate hydrolases"/>
    <property type="match status" value="1"/>
</dbReference>
<dbReference type="SUPFAM" id="SSF46785">
    <property type="entry name" value="Winged helix' DNA-binding domain"/>
    <property type="match status" value="1"/>
</dbReference>
<sequence length="335" mass="37250">MIEVDRIVSANAKVDDEYIDRAIRPKLLSDYIGQPQVREQMEIFIQAAKLRQDALDHLLIFGPPGLGKTTLANIVANEMGVNIRTTSGPVLEKAGDLAAMLTNLEPHDVLFIDEIHRLSPAIEEVLYPAMEDYQLDIMIGEGPAARSIKLDLPPFTLIGATTRAGSLTSPLRDRFGIVQRLEFYSVEDLASIVTRSAVCLQLEIDVEAGQEIACRSRGTPRIANRLLRRVRDYADVKNGGKITALIAQEALKMLDVDLAGFDFMDRKLLQAIIERFDGGPVGLDNLAAAIGEERDTIEDVLEPYLIQQGFLQRTPRGRIATSRTYRHFGLEQIEK</sequence>
<accession>Q0I1M3</accession>
<keyword id="KW-0067">ATP-binding</keyword>
<keyword id="KW-0963">Cytoplasm</keyword>
<keyword id="KW-0227">DNA damage</keyword>
<keyword id="KW-0233">DNA recombination</keyword>
<keyword id="KW-0234">DNA repair</keyword>
<keyword id="KW-0238">DNA-binding</keyword>
<keyword id="KW-0378">Hydrolase</keyword>
<keyword id="KW-0547">Nucleotide-binding</keyword>
<feature type="chain" id="PRO_1000001414" description="Holliday junction branch migration complex subunit RuvB">
    <location>
        <begin position="1"/>
        <end position="335"/>
    </location>
</feature>
<feature type="region of interest" description="Large ATPase domain (RuvB-L)" evidence="1">
    <location>
        <begin position="4"/>
        <end position="184"/>
    </location>
</feature>
<feature type="region of interest" description="Small ATPAse domain (RuvB-S)" evidence="1">
    <location>
        <begin position="185"/>
        <end position="255"/>
    </location>
</feature>
<feature type="region of interest" description="Head domain (RuvB-H)" evidence="1">
    <location>
        <begin position="258"/>
        <end position="335"/>
    </location>
</feature>
<feature type="binding site" evidence="1">
    <location>
        <position position="23"/>
    </location>
    <ligand>
        <name>ATP</name>
        <dbReference type="ChEBI" id="CHEBI:30616"/>
    </ligand>
</feature>
<feature type="binding site" evidence="1">
    <location>
        <position position="24"/>
    </location>
    <ligand>
        <name>ATP</name>
        <dbReference type="ChEBI" id="CHEBI:30616"/>
    </ligand>
</feature>
<feature type="binding site" evidence="1">
    <location>
        <position position="65"/>
    </location>
    <ligand>
        <name>ATP</name>
        <dbReference type="ChEBI" id="CHEBI:30616"/>
    </ligand>
</feature>
<feature type="binding site" evidence="1">
    <location>
        <position position="68"/>
    </location>
    <ligand>
        <name>ATP</name>
        <dbReference type="ChEBI" id="CHEBI:30616"/>
    </ligand>
</feature>
<feature type="binding site" evidence="1">
    <location>
        <position position="69"/>
    </location>
    <ligand>
        <name>ATP</name>
        <dbReference type="ChEBI" id="CHEBI:30616"/>
    </ligand>
</feature>
<feature type="binding site" evidence="1">
    <location>
        <position position="69"/>
    </location>
    <ligand>
        <name>Mg(2+)</name>
        <dbReference type="ChEBI" id="CHEBI:18420"/>
    </ligand>
</feature>
<feature type="binding site" evidence="1">
    <location>
        <position position="70"/>
    </location>
    <ligand>
        <name>ATP</name>
        <dbReference type="ChEBI" id="CHEBI:30616"/>
    </ligand>
</feature>
<feature type="binding site" evidence="1">
    <location>
        <begin position="131"/>
        <end position="133"/>
    </location>
    <ligand>
        <name>ATP</name>
        <dbReference type="ChEBI" id="CHEBI:30616"/>
    </ligand>
</feature>
<feature type="binding site" evidence="1">
    <location>
        <position position="174"/>
    </location>
    <ligand>
        <name>ATP</name>
        <dbReference type="ChEBI" id="CHEBI:30616"/>
    </ligand>
</feature>
<feature type="binding site" evidence="1">
    <location>
        <position position="184"/>
    </location>
    <ligand>
        <name>ATP</name>
        <dbReference type="ChEBI" id="CHEBI:30616"/>
    </ligand>
</feature>
<feature type="binding site" evidence="1">
    <location>
        <position position="221"/>
    </location>
    <ligand>
        <name>ATP</name>
        <dbReference type="ChEBI" id="CHEBI:30616"/>
    </ligand>
</feature>
<feature type="binding site" evidence="1">
    <location>
        <position position="294"/>
    </location>
    <ligand>
        <name>DNA</name>
        <dbReference type="ChEBI" id="CHEBI:16991"/>
    </ligand>
</feature>
<feature type="binding site" evidence="1">
    <location>
        <position position="313"/>
    </location>
    <ligand>
        <name>DNA</name>
        <dbReference type="ChEBI" id="CHEBI:16991"/>
    </ligand>
</feature>
<feature type="binding site" evidence="1">
    <location>
        <position position="318"/>
    </location>
    <ligand>
        <name>DNA</name>
        <dbReference type="ChEBI" id="CHEBI:16991"/>
    </ligand>
</feature>
<name>RUVB_HISS1</name>
<protein>
    <recommendedName>
        <fullName evidence="1">Holliday junction branch migration complex subunit RuvB</fullName>
        <ecNumber evidence="1">3.6.4.-</ecNumber>
    </recommendedName>
</protein>
<organism>
    <name type="scientific">Histophilus somni (strain 129Pt)</name>
    <name type="common">Haemophilus somnus</name>
    <dbReference type="NCBI Taxonomy" id="205914"/>
    <lineage>
        <taxon>Bacteria</taxon>
        <taxon>Pseudomonadati</taxon>
        <taxon>Pseudomonadota</taxon>
        <taxon>Gammaproteobacteria</taxon>
        <taxon>Pasteurellales</taxon>
        <taxon>Pasteurellaceae</taxon>
        <taxon>Histophilus</taxon>
    </lineage>
</organism>
<evidence type="ECO:0000255" key="1">
    <source>
        <dbReference type="HAMAP-Rule" id="MF_00016"/>
    </source>
</evidence>
<reference key="1">
    <citation type="journal article" date="2007" name="J. Bacteriol.">
        <title>Complete genome sequence of Haemophilus somnus (Histophilus somni) strain 129Pt and comparison to Haemophilus ducreyi 35000HP and Haemophilus influenzae Rd.</title>
        <authorList>
            <person name="Challacombe J.F."/>
            <person name="Duncan A.J."/>
            <person name="Brettin T.S."/>
            <person name="Bruce D."/>
            <person name="Chertkov O."/>
            <person name="Detter J.C."/>
            <person name="Han C.S."/>
            <person name="Misra M."/>
            <person name="Richardson P."/>
            <person name="Tapia R."/>
            <person name="Thayer N."/>
            <person name="Xie G."/>
            <person name="Inzana T.J."/>
        </authorList>
    </citation>
    <scope>NUCLEOTIDE SEQUENCE [LARGE SCALE GENOMIC DNA]</scope>
    <source>
        <strain>129Pt</strain>
    </source>
</reference>
<proteinExistence type="inferred from homology"/>